<keyword id="KW-0240">DNA-directed RNA polymerase</keyword>
<keyword id="KW-0548">Nucleotidyltransferase</keyword>
<keyword id="KW-1185">Reference proteome</keyword>
<keyword id="KW-0804">Transcription</keyword>
<keyword id="KW-0808">Transferase</keyword>
<accession>A5CX12</accession>
<sequence length="110" mass="12166">MARVTVEDCLDHVENRFELVLIAAKRAHQLSSGGYKPLLNAGKDKPTVVALREIEAGLIDSSILSEIYVIDEQLSAQQKVLDSVKMSEIKDELSVTAVDKVIDEITEIEE</sequence>
<reference key="1">
    <citation type="journal article" date="2007" name="Curr. Biol.">
        <title>Reduced genome of the thioautotrophic intracellular symbiont in a deep-sea clam, Calyptogena okutanii.</title>
        <authorList>
            <person name="Kuwahara H."/>
            <person name="Yoshida T."/>
            <person name="Takaki Y."/>
            <person name="Shimamura S."/>
            <person name="Nishi S."/>
            <person name="Harada M."/>
            <person name="Matsuyama K."/>
            <person name="Takishita K."/>
            <person name="Kawato M."/>
            <person name="Uematsu K."/>
            <person name="Fujiwara Y."/>
            <person name="Sato T."/>
            <person name="Kato C."/>
            <person name="Kitagawa M."/>
            <person name="Kato I."/>
            <person name="Maruyama T."/>
        </authorList>
    </citation>
    <scope>NUCLEOTIDE SEQUENCE [LARGE SCALE GENOMIC DNA]</scope>
    <source>
        <strain>HA</strain>
    </source>
</reference>
<evidence type="ECO:0000255" key="1">
    <source>
        <dbReference type="HAMAP-Rule" id="MF_00366"/>
    </source>
</evidence>
<protein>
    <recommendedName>
        <fullName evidence="1">DNA-directed RNA polymerase subunit omega</fullName>
        <shortName evidence="1">RNAP omega subunit</shortName>
        <ecNumber evidence="1">2.7.7.6</ecNumber>
    </recommendedName>
    <alternativeName>
        <fullName evidence="1">RNA polymerase omega subunit</fullName>
    </alternativeName>
    <alternativeName>
        <fullName evidence="1">Transcriptase subunit omega</fullName>
    </alternativeName>
</protein>
<gene>
    <name evidence="1" type="primary">rpoZ</name>
    <name type="ordered locus">COSY_0376</name>
</gene>
<dbReference type="EC" id="2.7.7.6" evidence="1"/>
<dbReference type="EMBL" id="AP009247">
    <property type="protein sequence ID" value="BAF61498.1"/>
    <property type="molecule type" value="Genomic_DNA"/>
</dbReference>
<dbReference type="RefSeq" id="WP_011929768.1">
    <property type="nucleotide sequence ID" value="NC_009465.1"/>
</dbReference>
<dbReference type="SMR" id="A5CX12"/>
<dbReference type="STRING" id="412965.COSY_0376"/>
<dbReference type="KEGG" id="vok:COSY_0376"/>
<dbReference type="eggNOG" id="COG1758">
    <property type="taxonomic scope" value="Bacteria"/>
</dbReference>
<dbReference type="HOGENOM" id="CLU_125406_5_3_6"/>
<dbReference type="OrthoDB" id="9796300at2"/>
<dbReference type="Proteomes" id="UP000000247">
    <property type="component" value="Chromosome"/>
</dbReference>
<dbReference type="GO" id="GO:0000428">
    <property type="term" value="C:DNA-directed RNA polymerase complex"/>
    <property type="evidence" value="ECO:0007669"/>
    <property type="project" value="UniProtKB-KW"/>
</dbReference>
<dbReference type="GO" id="GO:0003677">
    <property type="term" value="F:DNA binding"/>
    <property type="evidence" value="ECO:0007669"/>
    <property type="project" value="UniProtKB-UniRule"/>
</dbReference>
<dbReference type="GO" id="GO:0003899">
    <property type="term" value="F:DNA-directed RNA polymerase activity"/>
    <property type="evidence" value="ECO:0007669"/>
    <property type="project" value="UniProtKB-UniRule"/>
</dbReference>
<dbReference type="GO" id="GO:0006351">
    <property type="term" value="P:DNA-templated transcription"/>
    <property type="evidence" value="ECO:0007669"/>
    <property type="project" value="UniProtKB-UniRule"/>
</dbReference>
<dbReference type="Gene3D" id="3.90.940.10">
    <property type="match status" value="1"/>
</dbReference>
<dbReference type="HAMAP" id="MF_00366">
    <property type="entry name" value="RNApol_bact_RpoZ"/>
    <property type="match status" value="1"/>
</dbReference>
<dbReference type="InterPro" id="IPR003716">
    <property type="entry name" value="DNA-dir_RNA_pol_omega"/>
</dbReference>
<dbReference type="InterPro" id="IPR006110">
    <property type="entry name" value="Pol_omega/Rpo6/RPB6"/>
</dbReference>
<dbReference type="InterPro" id="IPR036161">
    <property type="entry name" value="RPB6/omega-like_sf"/>
</dbReference>
<dbReference type="NCBIfam" id="TIGR00690">
    <property type="entry name" value="rpoZ"/>
    <property type="match status" value="1"/>
</dbReference>
<dbReference type="PANTHER" id="PTHR34476">
    <property type="entry name" value="DNA-DIRECTED RNA POLYMERASE SUBUNIT OMEGA"/>
    <property type="match status" value="1"/>
</dbReference>
<dbReference type="PANTHER" id="PTHR34476:SF1">
    <property type="entry name" value="DNA-DIRECTED RNA POLYMERASE SUBUNIT OMEGA"/>
    <property type="match status" value="1"/>
</dbReference>
<dbReference type="Pfam" id="PF01192">
    <property type="entry name" value="RNA_pol_Rpb6"/>
    <property type="match status" value="1"/>
</dbReference>
<dbReference type="SMART" id="SM01409">
    <property type="entry name" value="RNA_pol_Rpb6"/>
    <property type="match status" value="1"/>
</dbReference>
<dbReference type="SUPFAM" id="SSF63562">
    <property type="entry name" value="RPB6/omega subunit-like"/>
    <property type="match status" value="1"/>
</dbReference>
<name>RPOZ_VESOH</name>
<comment type="function">
    <text evidence="1">Promotes RNA polymerase assembly. Latches the N- and C-terminal regions of the beta' subunit thereby facilitating its interaction with the beta and alpha subunits.</text>
</comment>
<comment type="catalytic activity">
    <reaction evidence="1">
        <text>RNA(n) + a ribonucleoside 5'-triphosphate = RNA(n+1) + diphosphate</text>
        <dbReference type="Rhea" id="RHEA:21248"/>
        <dbReference type="Rhea" id="RHEA-COMP:14527"/>
        <dbReference type="Rhea" id="RHEA-COMP:17342"/>
        <dbReference type="ChEBI" id="CHEBI:33019"/>
        <dbReference type="ChEBI" id="CHEBI:61557"/>
        <dbReference type="ChEBI" id="CHEBI:140395"/>
        <dbReference type="EC" id="2.7.7.6"/>
    </reaction>
</comment>
<comment type="subunit">
    <text evidence="1">The RNAP catalytic core consists of 2 alpha, 1 beta, 1 beta' and 1 omega subunit. When a sigma factor is associated with the core the holoenzyme is formed, which can initiate transcription.</text>
</comment>
<comment type="similarity">
    <text evidence="1">Belongs to the RNA polymerase subunit omega family.</text>
</comment>
<proteinExistence type="inferred from homology"/>
<organism>
    <name type="scientific">Vesicomyosocius okutanii subsp. Calyptogena okutanii (strain HA)</name>
    <dbReference type="NCBI Taxonomy" id="412965"/>
    <lineage>
        <taxon>Bacteria</taxon>
        <taxon>Pseudomonadati</taxon>
        <taxon>Pseudomonadota</taxon>
        <taxon>Gammaproteobacteria</taxon>
        <taxon>Candidatus Pseudothioglobaceae</taxon>
        <taxon>Candidatus Vesicomyosocius</taxon>
    </lineage>
</organism>
<feature type="chain" id="PRO_1000006037" description="DNA-directed RNA polymerase subunit omega">
    <location>
        <begin position="1"/>
        <end position="110"/>
    </location>
</feature>